<reference key="1">
    <citation type="journal article" date="1997" name="Genome Res.">
        <title>The comparative genomic structure and sequence of the surfeit gene homologs in the puffer fish Fugu rubripes and their association with CpG-rich islands.</title>
        <authorList>
            <person name="Armes N."/>
            <person name="Gilley J."/>
            <person name="Fried M."/>
        </authorList>
    </citation>
    <scope>NUCLEOTIDE SEQUENCE [GENOMIC DNA]</scope>
</reference>
<protein>
    <recommendedName>
        <fullName evidence="4">Surfeit locus protein 4</fullName>
    </recommendedName>
</protein>
<evidence type="ECO:0000250" key="1">
    <source>
        <dbReference type="UniProtKB" id="O15260"/>
    </source>
</evidence>
<evidence type="ECO:0000255" key="2"/>
<evidence type="ECO:0000303" key="3">
    <source>
    </source>
</evidence>
<evidence type="ECO:0000305" key="4"/>
<proteinExistence type="inferred from homology"/>
<sequence>MGQEDLMNRAEDVADQFLRVTKQYLPHLARLCLISTFLEDGIRMWFQWNEQRDYIEATWSCGYFLATCFVLLNLIGQLGGCVLILSRNFVQYACFGLFGIIALQTVAYSILWDLKFLMRNLALGGGLLLLLAESRSEGKSMFAGVPSMGESSPKQYMQLGGRVLLVLMFMTLLHFDFNFFSILQNLVGTALIILVAIGFKTKLAALTLVLWLLVINVYFNAFWTIPAYKPMHDFLKYDFFQTTSVIGGLLLVVALGPGGVSMDEKKKEW</sequence>
<dbReference type="EMBL" id="Y15170">
    <property type="protein sequence ID" value="CAA75441.1"/>
    <property type="molecule type" value="Genomic_DNA"/>
</dbReference>
<dbReference type="RefSeq" id="XP_003965425.1">
    <property type="nucleotide sequence ID" value="XM_003965376.3"/>
</dbReference>
<dbReference type="FunCoup" id="O57590">
    <property type="interactions" value="1429"/>
</dbReference>
<dbReference type="STRING" id="31033.ENSTRUP00000079951"/>
<dbReference type="GeneID" id="101075587"/>
<dbReference type="KEGG" id="tru:101075587"/>
<dbReference type="CTD" id="6836"/>
<dbReference type="eggNOG" id="KOG3998">
    <property type="taxonomic scope" value="Eukaryota"/>
</dbReference>
<dbReference type="HOGENOM" id="CLU_056195_0_0_1"/>
<dbReference type="InParanoid" id="O57590"/>
<dbReference type="OrthoDB" id="7859621at2759"/>
<dbReference type="TreeFam" id="TF300001"/>
<dbReference type="Proteomes" id="UP000005226">
    <property type="component" value="Unplaced"/>
</dbReference>
<dbReference type="GO" id="GO:0005789">
    <property type="term" value="C:endoplasmic reticulum membrane"/>
    <property type="evidence" value="ECO:0007669"/>
    <property type="project" value="UniProtKB-SubCell"/>
</dbReference>
<dbReference type="GO" id="GO:0033116">
    <property type="term" value="C:endoplasmic reticulum-Golgi intermediate compartment membrane"/>
    <property type="evidence" value="ECO:0007669"/>
    <property type="project" value="UniProtKB-SubCell"/>
</dbReference>
<dbReference type="GO" id="GO:0000139">
    <property type="term" value="C:Golgi membrane"/>
    <property type="evidence" value="ECO:0007669"/>
    <property type="project" value="UniProtKB-SubCell"/>
</dbReference>
<dbReference type="GO" id="GO:0038024">
    <property type="term" value="F:cargo receptor activity"/>
    <property type="evidence" value="ECO:0000250"/>
    <property type="project" value="UniProtKB"/>
</dbReference>
<dbReference type="GO" id="GO:0006888">
    <property type="term" value="P:endoplasmic reticulum to Golgi vesicle-mediated transport"/>
    <property type="evidence" value="ECO:0000250"/>
    <property type="project" value="UniProtKB"/>
</dbReference>
<dbReference type="GO" id="GO:0007030">
    <property type="term" value="P:Golgi organization"/>
    <property type="evidence" value="ECO:0007669"/>
    <property type="project" value="TreeGrafter"/>
</dbReference>
<dbReference type="GO" id="GO:0055088">
    <property type="term" value="P:lipid homeostasis"/>
    <property type="evidence" value="ECO:0000250"/>
    <property type="project" value="UniProtKB"/>
</dbReference>
<dbReference type="GO" id="GO:0042953">
    <property type="term" value="P:lipoprotein transport"/>
    <property type="evidence" value="ECO:0000250"/>
    <property type="project" value="UniProtKB"/>
</dbReference>
<dbReference type="GO" id="GO:0032368">
    <property type="term" value="P:regulation of lipid transport"/>
    <property type="evidence" value="ECO:0000250"/>
    <property type="project" value="UniProtKB"/>
</dbReference>
<dbReference type="InterPro" id="IPR045214">
    <property type="entry name" value="Surf1/Surf4"/>
</dbReference>
<dbReference type="InterPro" id="IPR002995">
    <property type="entry name" value="Surf4"/>
</dbReference>
<dbReference type="PANTHER" id="PTHR23427">
    <property type="entry name" value="SURFEIT LOCUS PROTEIN"/>
    <property type="match status" value="1"/>
</dbReference>
<dbReference type="PANTHER" id="PTHR23427:SF1">
    <property type="entry name" value="SURFEIT LOCUS PROTEIN 4"/>
    <property type="match status" value="1"/>
</dbReference>
<dbReference type="Pfam" id="PF02077">
    <property type="entry name" value="SURF4"/>
    <property type="match status" value="1"/>
</dbReference>
<dbReference type="PROSITE" id="PS01339">
    <property type="entry name" value="SURF4"/>
    <property type="match status" value="1"/>
</dbReference>
<feature type="chain" id="PRO_0000127666" description="Surfeit locus protein 4">
    <location>
        <begin position="1"/>
        <end position="269"/>
    </location>
</feature>
<feature type="transmembrane region" description="Helical" evidence="2">
    <location>
        <begin position="64"/>
        <end position="84"/>
    </location>
</feature>
<feature type="transmembrane region" description="Helical" evidence="2">
    <location>
        <begin position="92"/>
        <end position="112"/>
    </location>
</feature>
<feature type="transmembrane region" description="Helical" evidence="2">
    <location>
        <begin position="179"/>
        <end position="199"/>
    </location>
</feature>
<feature type="transmembrane region" description="Helical" evidence="2">
    <location>
        <begin position="203"/>
        <end position="223"/>
    </location>
</feature>
<feature type="transmembrane region" description="Helical" evidence="2">
    <location>
        <begin position="242"/>
        <end position="262"/>
    </location>
</feature>
<feature type="short sequence motif" description="Di-lysine motif" evidence="2">
    <location>
        <begin position="266"/>
        <end position="269"/>
    </location>
</feature>
<name>SURF4_TAKRU</name>
<organism>
    <name type="scientific">Takifugu rubripes</name>
    <name type="common">Japanese pufferfish</name>
    <name type="synonym">Fugu rubripes</name>
    <dbReference type="NCBI Taxonomy" id="31033"/>
    <lineage>
        <taxon>Eukaryota</taxon>
        <taxon>Metazoa</taxon>
        <taxon>Chordata</taxon>
        <taxon>Craniata</taxon>
        <taxon>Vertebrata</taxon>
        <taxon>Euteleostomi</taxon>
        <taxon>Actinopterygii</taxon>
        <taxon>Neopterygii</taxon>
        <taxon>Teleostei</taxon>
        <taxon>Neoteleostei</taxon>
        <taxon>Acanthomorphata</taxon>
        <taxon>Eupercaria</taxon>
        <taxon>Tetraodontiformes</taxon>
        <taxon>Tetradontoidea</taxon>
        <taxon>Tetraodontidae</taxon>
        <taxon>Takifugu</taxon>
    </lineage>
</organism>
<gene>
    <name evidence="3" type="primary">surf4</name>
</gene>
<keyword id="KW-0256">Endoplasmic reticulum</keyword>
<keyword id="KW-0333">Golgi apparatus</keyword>
<keyword id="KW-0472">Membrane</keyword>
<keyword id="KW-0653">Protein transport</keyword>
<keyword id="KW-1185">Reference proteome</keyword>
<keyword id="KW-0812">Transmembrane</keyword>
<keyword id="KW-1133">Transmembrane helix</keyword>
<keyword id="KW-0813">Transport</keyword>
<accession>O57590</accession>
<comment type="function">
    <text evidence="1">Endoplasmic reticulum cargo receptor that mediates the export of lipoproteins by recruiting cargos into COPII vesicles to facilitate their secretion. Acts as a cargo receptor for lipoproteins bearing both APOB and APOA1, thereby regulating lipoprotein delivery and the maintenance of lipid homeostasis.</text>
</comment>
<comment type="subcellular location">
    <subcellularLocation>
        <location evidence="1">Endoplasmic reticulum membrane</location>
        <topology evidence="2">Multi-pass membrane protein</topology>
    </subcellularLocation>
    <subcellularLocation>
        <location evidence="1">Endoplasmic reticulum-Golgi intermediate compartment membrane</location>
        <topology evidence="2">Multi-pass membrane protein</topology>
    </subcellularLocation>
    <subcellularLocation>
        <location evidence="1">Golgi apparatus membrane</location>
        <topology evidence="2">Multi-pass membrane protein</topology>
    </subcellularLocation>
    <text evidence="1">Active at endoplasmic reticulum exit sites (ERES) where it is incorporated together with its lipoprotein cargos into COPII-coated vesicles. From the Golgi it is recycled back to the endoplasmic reticulum.</text>
</comment>
<comment type="domain">
    <text evidence="1">The di-lysine motif confers endoplasmic reticulum localization for type I membrane proteins.</text>
</comment>
<comment type="similarity">
    <text evidence="4">Belongs to the SURF4 family.</text>
</comment>